<proteinExistence type="evidence at transcript level"/>
<evidence type="ECO:0000250" key="1"/>
<evidence type="ECO:0000250" key="2">
    <source>
        <dbReference type="UniProtKB" id="O35454"/>
    </source>
</evidence>
<evidence type="ECO:0000250" key="3">
    <source>
        <dbReference type="UniProtKB" id="P51797"/>
    </source>
</evidence>
<evidence type="ECO:0000255" key="4"/>
<evidence type="ECO:0000255" key="5">
    <source>
        <dbReference type="PROSITE-ProRule" id="PRU00703"/>
    </source>
</evidence>
<evidence type="ECO:0000256" key="6">
    <source>
        <dbReference type="SAM" id="MobiDB-lite"/>
    </source>
</evidence>
<evidence type="ECO:0000305" key="7"/>
<sequence length="869" mass="97161">MAGCRGSLCCCCRWCCCCGERETRTPEELTILGETQEEEDEILPRKDYESLDYDRCINDPYLEVLETMDHKKGRWYEVVKWTVVFAIGVCTGLVGLFVDFFVQLFTQLKFGVVEASVEECSQKGCLALSLLELLGFNLTFVFLASLLVLIEPVAAGSGIPEIKCYLNGVKVPGIVRLRTLLCKVFGVLFSVAGGLFVGKEGPMIHSGAVVGAGLPQFQSISLRKIQFNFPYFRSDRDKRDFVSAGAAAGIAAAFGAPIGATLFSLEEGSSFWNQGLTWKVLFCSMSATFTLNFFRSGIQFGSWGSFQLPGLLNFGEFKCSDSDKKCHLWTAMDMGFFVVMGVIGGLLGATFNCLNKRLAKYRMRNVHPKPKLVRVLESLLVSLVTTLVVFVASMVLGECRQMSSSSQISNGSLKLQVTSDVNSSIKAFFCPNDTYNDMATLFFNPQESAILQLFHQDGTFSPITLALFFVLYFLLACWTYGISVPSGLFVPSLLCGAAFGRLVANVLKSYIGLSHIYSGTFSLIGAAALLGGVVRMTISLTVILIESTNEITYGLPIMITLMVAKWTGDFFNKGIYDIHVGLRGVPLLEWETEVEMDKLRASDIMEPNLTYVYPHTRIQSLVSILRTTVHHAFPVVTENRGNEKEFMKGNQLISNNIKFKKSSILTRAGEQRRRSQSMKSYPSSELRNVCDEHVASEEPAEKEDLLQQMLERRYTPYPNLYPDQSPSEDWTMEERFRPLTFHGLILRSQLVTLLVRGVCYSESQSSASQPRLSYAEMAEDYPRFPDIHDLDLTLLNPRMIVDVTPYMNPSPFTVSPNTHVSQVFNLFRTMGLRHLPVVNAVGEIVGIVTRHNLTYEFLQARLRQHYQTI</sequence>
<reference key="1">
    <citation type="submission" date="1999-12" db="EMBL/GenBank/DDBJ databases">
        <authorList>
            <person name="Rae J.L."/>
        </authorList>
    </citation>
    <scope>NUCLEOTIDE SEQUENCE [MRNA]</scope>
    <source>
        <strain>New Zealand white</strain>
        <tissue>Corneal epithelium</tissue>
    </source>
</reference>
<comment type="function">
    <text evidence="3">Voltage-gated channel mediating the exchange of chloride ions against protons. Functions as antiporter and contributes to the acidification of the late endosome lumen. The CLC channel family contains both chloride channels and proton-coupled anion transporters that exchange chloride or another anion for protons. The presence of conserved gating glutamate residues is typical for family members that function as antiporters.</text>
</comment>
<comment type="catalytic activity">
    <reaction evidence="3">
        <text>2 chloride(in) + H(+)(out) = 2 chloride(out) + H(+)(in)</text>
        <dbReference type="Rhea" id="RHEA:29567"/>
        <dbReference type="ChEBI" id="CHEBI:15378"/>
        <dbReference type="ChEBI" id="CHEBI:17996"/>
    </reaction>
    <physiologicalReaction direction="left-to-right" evidence="3">
        <dbReference type="Rhea" id="RHEA:29568"/>
    </physiologicalReaction>
</comment>
<comment type="subcellular location">
    <subcellularLocation>
        <location evidence="3">Late endosome membrane</location>
        <topology evidence="3">Multi-pass membrane protein</topology>
    </subcellularLocation>
</comment>
<comment type="PTM">
    <text evidence="3">N-glycosylated on several asparagine residues.</text>
</comment>
<comment type="similarity">
    <text evidence="7">Belongs to the chloride channel (TC 2.A.49) family. ClC-6/CLCN6 subfamily.</text>
</comment>
<organism>
    <name type="scientific">Oryctolagus cuniculus</name>
    <name type="common">Rabbit</name>
    <dbReference type="NCBI Taxonomy" id="9986"/>
    <lineage>
        <taxon>Eukaryota</taxon>
        <taxon>Metazoa</taxon>
        <taxon>Chordata</taxon>
        <taxon>Craniata</taxon>
        <taxon>Vertebrata</taxon>
        <taxon>Euteleostomi</taxon>
        <taxon>Mammalia</taxon>
        <taxon>Eutheria</taxon>
        <taxon>Euarchontoglires</taxon>
        <taxon>Glires</taxon>
        <taxon>Lagomorpha</taxon>
        <taxon>Leporidae</taxon>
        <taxon>Oryctolagus</taxon>
    </lineage>
</organism>
<keyword id="KW-0050">Antiport</keyword>
<keyword id="KW-0067">ATP-binding</keyword>
<keyword id="KW-0129">CBS domain</keyword>
<keyword id="KW-0868">Chloride</keyword>
<keyword id="KW-0967">Endosome</keyword>
<keyword id="KW-0325">Glycoprotein</keyword>
<keyword id="KW-0406">Ion transport</keyword>
<keyword id="KW-0472">Membrane</keyword>
<keyword id="KW-0547">Nucleotide-binding</keyword>
<keyword id="KW-0597">Phosphoprotein</keyword>
<keyword id="KW-1185">Reference proteome</keyword>
<keyword id="KW-0677">Repeat</keyword>
<keyword id="KW-0812">Transmembrane</keyword>
<keyword id="KW-1133">Transmembrane helix</keyword>
<keyword id="KW-0813">Transport</keyword>
<accession>Q9TT16</accession>
<dbReference type="EMBL" id="AF209724">
    <property type="protein sequence ID" value="AAF22834.1"/>
    <property type="molecule type" value="mRNA"/>
</dbReference>
<dbReference type="RefSeq" id="NP_001075543.1">
    <property type="nucleotide sequence ID" value="NM_001082074.1"/>
</dbReference>
<dbReference type="SMR" id="Q9TT16"/>
<dbReference type="FunCoup" id="Q9TT16">
    <property type="interactions" value="875"/>
</dbReference>
<dbReference type="STRING" id="9986.ENSOCUP00000006313"/>
<dbReference type="GlyCosmos" id="Q9TT16">
    <property type="glycosylation" value="3 sites, No reported glycans"/>
</dbReference>
<dbReference type="PaxDb" id="9986-ENSOCUP00000006313"/>
<dbReference type="GeneID" id="100008750"/>
<dbReference type="KEGG" id="ocu:100008750"/>
<dbReference type="CTD" id="1185"/>
<dbReference type="eggNOG" id="KOG0474">
    <property type="taxonomic scope" value="Eukaryota"/>
</dbReference>
<dbReference type="InParanoid" id="Q9TT16"/>
<dbReference type="OrthoDB" id="428525at2759"/>
<dbReference type="Proteomes" id="UP000001811">
    <property type="component" value="Unplaced"/>
</dbReference>
<dbReference type="GO" id="GO:0031902">
    <property type="term" value="C:late endosome membrane"/>
    <property type="evidence" value="ECO:0007669"/>
    <property type="project" value="UniProtKB-SubCell"/>
</dbReference>
<dbReference type="GO" id="GO:0005765">
    <property type="term" value="C:lysosomal membrane"/>
    <property type="evidence" value="ECO:0007669"/>
    <property type="project" value="TreeGrafter"/>
</dbReference>
<dbReference type="GO" id="GO:0015297">
    <property type="term" value="F:antiporter activity"/>
    <property type="evidence" value="ECO:0007669"/>
    <property type="project" value="UniProtKB-KW"/>
</dbReference>
<dbReference type="GO" id="GO:0005524">
    <property type="term" value="F:ATP binding"/>
    <property type="evidence" value="ECO:0007669"/>
    <property type="project" value="UniProtKB-KW"/>
</dbReference>
<dbReference type="GO" id="GO:0005247">
    <property type="term" value="F:voltage-gated chloride channel activity"/>
    <property type="evidence" value="ECO:0000250"/>
    <property type="project" value="UniProtKB"/>
</dbReference>
<dbReference type="GO" id="GO:0006821">
    <property type="term" value="P:chloride transport"/>
    <property type="evidence" value="ECO:0000250"/>
    <property type="project" value="UniProtKB"/>
</dbReference>
<dbReference type="CDD" id="cd04591">
    <property type="entry name" value="CBS_pair_voltage-gated_CLC_euk_bac"/>
    <property type="match status" value="1"/>
</dbReference>
<dbReference type="CDD" id="cd03685">
    <property type="entry name" value="ClC_6_like"/>
    <property type="match status" value="1"/>
</dbReference>
<dbReference type="FunFam" id="3.10.580.10:FF:000010">
    <property type="entry name" value="Chloride voltage-gated channel 6"/>
    <property type="match status" value="1"/>
</dbReference>
<dbReference type="Gene3D" id="3.10.580.10">
    <property type="entry name" value="CBS-domain"/>
    <property type="match status" value="1"/>
</dbReference>
<dbReference type="Gene3D" id="1.10.3080.10">
    <property type="entry name" value="Clc chloride channel"/>
    <property type="match status" value="1"/>
</dbReference>
<dbReference type="InterPro" id="IPR000644">
    <property type="entry name" value="CBS_dom"/>
</dbReference>
<dbReference type="InterPro" id="IPR046342">
    <property type="entry name" value="CBS_dom_sf"/>
</dbReference>
<dbReference type="InterPro" id="IPR051280">
    <property type="entry name" value="Cl-channel/antiporter"/>
</dbReference>
<dbReference type="InterPro" id="IPR014743">
    <property type="entry name" value="Cl-channel_core"/>
</dbReference>
<dbReference type="InterPro" id="IPR002248">
    <property type="entry name" value="Cl_channel-6"/>
</dbReference>
<dbReference type="InterPro" id="IPR001807">
    <property type="entry name" value="ClC"/>
</dbReference>
<dbReference type="PANTHER" id="PTHR11689">
    <property type="entry name" value="CHLORIDE CHANNEL PROTEIN CLC FAMILY MEMBER"/>
    <property type="match status" value="1"/>
</dbReference>
<dbReference type="PANTHER" id="PTHR11689:SF158">
    <property type="entry name" value="H(+)_CL(-) EXCHANGE TRANSPORTER 6"/>
    <property type="match status" value="1"/>
</dbReference>
<dbReference type="Pfam" id="PF00571">
    <property type="entry name" value="CBS"/>
    <property type="match status" value="2"/>
</dbReference>
<dbReference type="Pfam" id="PF00654">
    <property type="entry name" value="Voltage_CLC"/>
    <property type="match status" value="1"/>
</dbReference>
<dbReference type="PRINTS" id="PR00762">
    <property type="entry name" value="CLCHANNEL"/>
</dbReference>
<dbReference type="PRINTS" id="PR01117">
    <property type="entry name" value="CLCHANNEL6"/>
</dbReference>
<dbReference type="SMART" id="SM00116">
    <property type="entry name" value="CBS"/>
    <property type="match status" value="2"/>
</dbReference>
<dbReference type="SUPFAM" id="SSF54631">
    <property type="entry name" value="CBS-domain pair"/>
    <property type="match status" value="1"/>
</dbReference>
<dbReference type="SUPFAM" id="SSF81340">
    <property type="entry name" value="Clc chloride channel"/>
    <property type="match status" value="1"/>
</dbReference>
<dbReference type="PROSITE" id="PS51371">
    <property type="entry name" value="CBS"/>
    <property type="match status" value="2"/>
</dbReference>
<protein>
    <recommendedName>
        <fullName>H(+)/Cl(-) exchange transporter 6</fullName>
    </recommendedName>
    <alternativeName>
        <fullName>Chloride channel protein 6</fullName>
        <shortName>ClC-6</shortName>
    </alternativeName>
    <alternativeName>
        <fullName>Chloride transport protein 6</fullName>
    </alternativeName>
</protein>
<name>CLCN6_RABIT</name>
<gene>
    <name type="primary">CLCN6</name>
</gene>
<feature type="chain" id="PRO_0000094451" description="H(+)/Cl(-) exchange transporter 6">
    <location>
        <begin position="1"/>
        <end position="869"/>
    </location>
</feature>
<feature type="topological domain" description="Cytoplasmic" evidence="1">
    <location>
        <begin position="1"/>
        <end position="80"/>
    </location>
</feature>
<feature type="transmembrane region" description="Helical" evidence="1">
    <location>
        <begin position="81"/>
        <end position="113"/>
    </location>
</feature>
<feature type="transmembrane region" description="Helical" evidence="1">
    <location>
        <begin position="128"/>
        <end position="150"/>
    </location>
</feature>
<feature type="intramembrane region" description="Helical" evidence="1">
    <location>
        <begin position="159"/>
        <end position="166"/>
    </location>
</feature>
<feature type="transmembrane region" description="Helical" evidence="1">
    <location>
        <begin position="176"/>
        <end position="194"/>
    </location>
</feature>
<feature type="transmembrane region" description="Helical" evidence="1">
    <location>
        <begin position="200"/>
        <end position="217"/>
    </location>
</feature>
<feature type="intramembrane region" description="Helical" evidence="1">
    <location>
        <begin position="241"/>
        <end position="253"/>
    </location>
</feature>
<feature type="intramembrane region" description="Helical" evidence="1">
    <location>
        <begin position="257"/>
        <end position="265"/>
    </location>
</feature>
<feature type="transmembrane region" description="Helical" evidence="1">
    <location>
        <begin position="277"/>
        <end position="294"/>
    </location>
</feature>
<feature type="transmembrane region" description="Helical" evidence="1">
    <location>
        <begin position="335"/>
        <end position="364"/>
    </location>
</feature>
<feature type="transmembrane region" description="Helical" evidence="1">
    <location>
        <begin position="371"/>
        <end position="392"/>
    </location>
</feature>
<feature type="transmembrane region" description="Helical" evidence="1">
    <location>
        <begin position="462"/>
        <end position="481"/>
    </location>
</feature>
<feature type="transmembrane region" description="Helical" evidence="1">
    <location>
        <begin position="487"/>
        <end position="511"/>
    </location>
</feature>
<feature type="intramembrane region" description="Helical" evidence="1">
    <location>
        <begin position="519"/>
        <end position="533"/>
    </location>
</feature>
<feature type="intramembrane region" description="Note=Loop between two helices" evidence="1">
    <location>
        <begin position="534"/>
        <end position="536"/>
    </location>
</feature>
<feature type="intramembrane region" description="Helical" evidence="1">
    <location>
        <begin position="537"/>
        <end position="548"/>
    </location>
</feature>
<feature type="intramembrane region" description="Note=Loop between two helices" evidence="1">
    <location>
        <begin position="549"/>
        <end position="552"/>
    </location>
</feature>
<feature type="transmembrane region" description="Helical" evidence="1">
    <location>
        <begin position="553"/>
        <end position="571"/>
    </location>
</feature>
<feature type="topological domain" description="Cytoplasmic" evidence="1">
    <location>
        <begin position="572"/>
        <end position="869"/>
    </location>
</feature>
<feature type="domain" description="CBS 1" evidence="5">
    <location>
        <begin position="605"/>
        <end position="662"/>
    </location>
</feature>
<feature type="domain" description="CBS 2" evidence="5">
    <location>
        <begin position="807"/>
        <end position="868"/>
    </location>
</feature>
<feature type="region of interest" description="Disordered" evidence="6">
    <location>
        <begin position="668"/>
        <end position="687"/>
    </location>
</feature>
<feature type="short sequence motif" description="Selectivity filter part_1" evidence="1">
    <location>
        <begin position="156"/>
        <end position="160"/>
    </location>
</feature>
<feature type="short sequence motif" description="Selectivity filter part_2" evidence="1">
    <location>
        <begin position="198"/>
        <end position="202"/>
    </location>
</feature>
<feature type="short sequence motif" description="Selectivity filter part_3" evidence="1">
    <location>
        <begin position="487"/>
        <end position="491"/>
    </location>
</feature>
<feature type="compositionally biased region" description="Polar residues" evidence="6">
    <location>
        <begin position="677"/>
        <end position="686"/>
    </location>
</feature>
<feature type="binding site" evidence="1">
    <location>
        <position position="157"/>
    </location>
    <ligand>
        <name>chloride</name>
        <dbReference type="ChEBI" id="CHEBI:17996"/>
    </ligand>
</feature>
<feature type="binding site" evidence="1">
    <location>
        <position position="489"/>
    </location>
    <ligand>
        <name>chloride</name>
        <dbReference type="ChEBI" id="CHEBI:17996"/>
    </ligand>
</feature>
<feature type="binding site" evidence="1">
    <location>
        <position position="576"/>
    </location>
    <ligand>
        <name>chloride</name>
        <dbReference type="ChEBI" id="CHEBI:17996"/>
    </ligand>
</feature>
<feature type="binding site" evidence="1">
    <location>
        <begin position="630"/>
        <end position="632"/>
    </location>
    <ligand>
        <name>ATP</name>
        <dbReference type="ChEBI" id="CHEBI:30616"/>
    </ligand>
</feature>
<feature type="binding site" evidence="1">
    <location>
        <begin position="849"/>
        <end position="852"/>
    </location>
    <ligand>
        <name>ATP</name>
        <dbReference type="ChEBI" id="CHEBI:30616"/>
    </ligand>
</feature>
<feature type="site" description="Mediates proton transfer from the outer aqueous phase to the interior of the protein; involved in linking H(+) and Cl(-) transport" evidence="1">
    <location>
        <position position="200"/>
    </location>
</feature>
<feature type="site" description="Mediates proton transfer from the protein to the inner aqueous phase" evidence="1">
    <location>
        <position position="267"/>
    </location>
</feature>
<feature type="modified residue" description="Phosphoserine" evidence="2">
    <location>
        <position position="773"/>
    </location>
</feature>
<feature type="glycosylation site" description="N-linked (GlcNAc...) asparagine" evidence="4">
    <location>
        <position position="410"/>
    </location>
</feature>
<feature type="glycosylation site" description="N-linked (GlcNAc...) asparagine" evidence="4">
    <location>
        <position position="422"/>
    </location>
</feature>
<feature type="glycosylation site" description="N-linked (GlcNAc...) asparagine" evidence="4">
    <location>
        <position position="432"/>
    </location>
</feature>